<reference key="1">
    <citation type="journal article" date="2002" name="Genome Res.">
        <title>The genome of Methanosarcina acetivorans reveals extensive metabolic and physiological diversity.</title>
        <authorList>
            <person name="Galagan J.E."/>
            <person name="Nusbaum C."/>
            <person name="Roy A."/>
            <person name="Endrizzi M.G."/>
            <person name="Macdonald P."/>
            <person name="FitzHugh W."/>
            <person name="Calvo S."/>
            <person name="Engels R."/>
            <person name="Smirnov S."/>
            <person name="Atnoor D."/>
            <person name="Brown A."/>
            <person name="Allen N."/>
            <person name="Naylor J."/>
            <person name="Stange-Thomann N."/>
            <person name="DeArellano K."/>
            <person name="Johnson R."/>
            <person name="Linton L."/>
            <person name="McEwan P."/>
            <person name="McKernan K."/>
            <person name="Talamas J."/>
            <person name="Tirrell A."/>
            <person name="Ye W."/>
            <person name="Zimmer A."/>
            <person name="Barber R.D."/>
            <person name="Cann I."/>
            <person name="Graham D.E."/>
            <person name="Grahame D.A."/>
            <person name="Guss A.M."/>
            <person name="Hedderich R."/>
            <person name="Ingram-Smith C."/>
            <person name="Kuettner H.C."/>
            <person name="Krzycki J.A."/>
            <person name="Leigh J.A."/>
            <person name="Li W."/>
            <person name="Liu J."/>
            <person name="Mukhopadhyay B."/>
            <person name="Reeve J.N."/>
            <person name="Smith K."/>
            <person name="Springer T.A."/>
            <person name="Umayam L.A."/>
            <person name="White O."/>
            <person name="White R.H."/>
            <person name="de Macario E.C."/>
            <person name="Ferry J.G."/>
            <person name="Jarrell K.F."/>
            <person name="Jing H."/>
            <person name="Macario A.J.L."/>
            <person name="Paulsen I.T."/>
            <person name="Pritchett M."/>
            <person name="Sowers K.R."/>
            <person name="Swanson R.V."/>
            <person name="Zinder S.H."/>
            <person name="Lander E."/>
            <person name="Metcalf W.W."/>
            <person name="Birren B."/>
        </authorList>
    </citation>
    <scope>NUCLEOTIDE SEQUENCE [LARGE SCALE GENOMIC DNA]</scope>
    <source>
        <strain>ATCC 35395 / DSM 2834 / JCM 12185 / C2A</strain>
    </source>
</reference>
<dbReference type="EC" id="2.1.1.-"/>
<dbReference type="EMBL" id="AE010299">
    <property type="protein sequence ID" value="AAM05212.1"/>
    <property type="molecule type" value="Genomic_DNA"/>
</dbReference>
<dbReference type="SMR" id="Q8TPU8"/>
<dbReference type="FunCoup" id="Q8TPU8">
    <property type="interactions" value="3"/>
</dbReference>
<dbReference type="STRING" id="188937.MA_1806"/>
<dbReference type="EnsemblBacteria" id="AAM05212">
    <property type="protein sequence ID" value="AAM05212"/>
    <property type="gene ID" value="MA_1806"/>
</dbReference>
<dbReference type="KEGG" id="mac:MA_1806"/>
<dbReference type="HOGENOM" id="CLU_086562_0_0_2"/>
<dbReference type="InParanoid" id="Q8TPU8"/>
<dbReference type="PhylomeDB" id="Q8TPU8"/>
<dbReference type="Proteomes" id="UP000002487">
    <property type="component" value="Chromosome"/>
</dbReference>
<dbReference type="GO" id="GO:0008168">
    <property type="term" value="F:methyltransferase activity"/>
    <property type="evidence" value="ECO:0007669"/>
    <property type="project" value="UniProtKB-KW"/>
</dbReference>
<dbReference type="GO" id="GO:0032259">
    <property type="term" value="P:methylation"/>
    <property type="evidence" value="ECO:0007669"/>
    <property type="project" value="UniProtKB-KW"/>
</dbReference>
<dbReference type="Gene3D" id="3.40.718.10">
    <property type="entry name" value="Isopropylmalate Dehydrogenase"/>
    <property type="match status" value="1"/>
</dbReference>
<dbReference type="InterPro" id="IPR016764">
    <property type="entry name" value="MeTrfase_MtxX_xsu"/>
</dbReference>
<dbReference type="NCBIfam" id="TIGR03270">
    <property type="entry name" value="methan_mark_4"/>
    <property type="match status" value="1"/>
</dbReference>
<dbReference type="PIRSF" id="PIRSF019709">
    <property type="entry name" value="Methyltransf_MtxX"/>
    <property type="match status" value="1"/>
</dbReference>
<dbReference type="SUPFAM" id="SSF53659">
    <property type="entry name" value="Isocitrate/Isopropylmalate dehydrogenase-like"/>
    <property type="match status" value="1"/>
</dbReference>
<accession>Q8TPU8</accession>
<comment type="subunit">
    <text evidence="1">May be part of a complex composed of 3 subunits; MtxA, MtxH and MtxX.</text>
</comment>
<comment type="similarity">
    <text evidence="2">Belongs to the MtxX family.</text>
</comment>
<organism>
    <name type="scientific">Methanosarcina acetivorans (strain ATCC 35395 / DSM 2834 / JCM 12185 / C2A)</name>
    <dbReference type="NCBI Taxonomy" id="188937"/>
    <lineage>
        <taxon>Archaea</taxon>
        <taxon>Methanobacteriati</taxon>
        <taxon>Methanobacteriota</taxon>
        <taxon>Stenosarchaea group</taxon>
        <taxon>Methanomicrobia</taxon>
        <taxon>Methanosarcinales</taxon>
        <taxon>Methanosarcinaceae</taxon>
        <taxon>Methanosarcina</taxon>
    </lineage>
</organism>
<feature type="chain" id="PRO_0000135930" description="Putative methyltransferase mtx subunit X">
    <location>
        <begin position="1"/>
        <end position="280"/>
    </location>
</feature>
<proteinExistence type="inferred from homology"/>
<name>MTXX_METAC</name>
<protein>
    <recommendedName>
        <fullName>Putative methyltransferase mtx subunit X</fullName>
        <ecNumber>2.1.1.-</ecNumber>
    </recommendedName>
</protein>
<evidence type="ECO:0000250" key="1"/>
<evidence type="ECO:0000305" key="2"/>
<sequence length="280" mass="30329">MYALLEAIEARARMNRARVAMGIRDPNPKTLESAWRAQVLGYAQVVLVGDKKEIDRIGTDLEVVDTKDPEKVLSELLVSRKVDAAIRGTAKASGTLSNLKEALGMKRVCRLALLLTADETPFFLAPVGIDEGNTIADKLRMIILGAEHIRRLGVEPVVGVLSGGRIGDLGRDRRVDRTLADGEFVAARALGLGINAKHYTILIEDAIKESNFIVAPDGISGNLIFRTIAFLGGGDGLGAPVLMDDYVFVDTSRVGGHFTKAIMLASALSYLHKERKKVIR</sequence>
<keyword id="KW-0489">Methyltransferase</keyword>
<keyword id="KW-1185">Reference proteome</keyword>
<keyword id="KW-0808">Transferase</keyword>
<gene>
    <name type="primary">mtxX</name>
    <name type="ordered locus">MA_1806</name>
</gene>